<gene>
    <name type="ORF">GA24773</name>
</gene>
<proteinExistence type="inferred from homology"/>
<sequence length="84" mass="9110">MSKVTFKITLTSDPKLPFKVLSVPEGTPFTAVLKFASEEFKVPAETSAIITDDGIGISPQQTAGNVFLKHGSELRLIPRDRVGH</sequence>
<evidence type="ECO:0000250" key="1"/>
<evidence type="ECO:0000255" key="2"/>
<evidence type="ECO:0000305" key="3"/>
<accession>B5E0K3</accession>
<feature type="chain" id="PRO_0000392009" description="Ubiquitin-fold modifier 1">
    <location>
        <begin position="1"/>
        <end position="83"/>
    </location>
</feature>
<feature type="propeptide" id="PRO_0000392010" description="Removed in mature form" evidence="1">
    <location>
        <position position="84"/>
    </location>
</feature>
<feature type="cross-link" description="Glycyl lysine isopeptide (Gly-Lys) (interchain with K-? in acceptor proteins)" evidence="2">
    <location>
        <position position="83"/>
    </location>
</feature>
<comment type="function">
    <text evidence="1">Ubiquitin-like modifier protein which binds to a number of as yet unidentified target proteins.</text>
</comment>
<comment type="similarity">
    <text evidence="3">Belongs to the UFM1 family.</text>
</comment>
<organism>
    <name type="scientific">Drosophila pseudoobscura pseudoobscura</name>
    <name type="common">Fruit fly</name>
    <dbReference type="NCBI Taxonomy" id="46245"/>
    <lineage>
        <taxon>Eukaryota</taxon>
        <taxon>Metazoa</taxon>
        <taxon>Ecdysozoa</taxon>
        <taxon>Arthropoda</taxon>
        <taxon>Hexapoda</taxon>
        <taxon>Insecta</taxon>
        <taxon>Pterygota</taxon>
        <taxon>Neoptera</taxon>
        <taxon>Endopterygota</taxon>
        <taxon>Diptera</taxon>
        <taxon>Brachycera</taxon>
        <taxon>Muscomorpha</taxon>
        <taxon>Ephydroidea</taxon>
        <taxon>Drosophilidae</taxon>
        <taxon>Drosophila</taxon>
        <taxon>Sophophora</taxon>
    </lineage>
</organism>
<dbReference type="EMBL" id="CM000071">
    <property type="protein sequence ID" value="EDY69002.1"/>
    <property type="molecule type" value="Genomic_DNA"/>
</dbReference>
<dbReference type="SMR" id="B5E0K3"/>
<dbReference type="FunCoup" id="B5E0K3">
    <property type="interactions" value="1041"/>
</dbReference>
<dbReference type="STRING" id="46245.B5E0K3"/>
<dbReference type="EnsemblMetazoa" id="FBtr0279340">
    <property type="protein sequence ID" value="FBpp0277778"/>
    <property type="gene ID" value="FBgn0246159"/>
</dbReference>
<dbReference type="KEGG" id="dpo:6898397"/>
<dbReference type="CTD" id="51569"/>
<dbReference type="eggNOG" id="KOG3483">
    <property type="taxonomic scope" value="Eukaryota"/>
</dbReference>
<dbReference type="HOGENOM" id="CLU_175114_0_0_1"/>
<dbReference type="InParanoid" id="B5E0K3"/>
<dbReference type="OMA" id="MEHAVGK"/>
<dbReference type="Proteomes" id="UP000001819">
    <property type="component" value="Chromosome 3"/>
</dbReference>
<dbReference type="Bgee" id="FBgn0246159">
    <property type="expression patterns" value="Expressed in female reproductive system and 2 other cell types or tissues"/>
</dbReference>
<dbReference type="GO" id="GO:0005737">
    <property type="term" value="C:cytoplasm"/>
    <property type="evidence" value="ECO:0007669"/>
    <property type="project" value="TreeGrafter"/>
</dbReference>
<dbReference type="GO" id="GO:0005634">
    <property type="term" value="C:nucleus"/>
    <property type="evidence" value="ECO:0007669"/>
    <property type="project" value="TreeGrafter"/>
</dbReference>
<dbReference type="GO" id="GO:1990592">
    <property type="term" value="P:protein K69-linked ufmylation"/>
    <property type="evidence" value="ECO:0007669"/>
    <property type="project" value="TreeGrafter"/>
</dbReference>
<dbReference type="CDD" id="cd01766">
    <property type="entry name" value="Ubl_UFM1"/>
    <property type="match status" value="1"/>
</dbReference>
<dbReference type="FunFam" id="3.10.20.90:FF:000044">
    <property type="entry name" value="Ubiquitin-fold modifier 1"/>
    <property type="match status" value="1"/>
</dbReference>
<dbReference type="Gene3D" id="3.10.20.90">
    <property type="entry name" value="Phosphatidylinositol 3-kinase Catalytic Subunit, Chain A, domain 1"/>
    <property type="match status" value="1"/>
</dbReference>
<dbReference type="InterPro" id="IPR029071">
    <property type="entry name" value="Ubiquitin-like_domsf"/>
</dbReference>
<dbReference type="InterPro" id="IPR005375">
    <property type="entry name" value="UFM1"/>
</dbReference>
<dbReference type="PANTHER" id="PTHR15825">
    <property type="entry name" value="UBIQUITIN-FOLD MODIFIER 1"/>
    <property type="match status" value="1"/>
</dbReference>
<dbReference type="PANTHER" id="PTHR15825:SF0">
    <property type="entry name" value="UBIQUITIN-FOLD MODIFIER 1"/>
    <property type="match status" value="1"/>
</dbReference>
<dbReference type="Pfam" id="PF03671">
    <property type="entry name" value="Ufm1"/>
    <property type="match status" value="1"/>
</dbReference>
<dbReference type="PIRSF" id="PIRSF038027">
    <property type="entry name" value="Ubiquitin-like_Ufm1"/>
    <property type="match status" value="1"/>
</dbReference>
<dbReference type="SUPFAM" id="SSF54236">
    <property type="entry name" value="Ubiquitin-like"/>
    <property type="match status" value="1"/>
</dbReference>
<name>UFM1_DROPS</name>
<protein>
    <recommendedName>
        <fullName>Ubiquitin-fold modifier 1</fullName>
    </recommendedName>
</protein>
<keyword id="KW-1017">Isopeptide bond</keyword>
<keyword id="KW-1185">Reference proteome</keyword>
<keyword id="KW-0833">Ubl conjugation pathway</keyword>
<reference key="1">
    <citation type="journal article" date="2005" name="Genome Res.">
        <title>Comparative genome sequencing of Drosophila pseudoobscura: chromosomal, gene, and cis-element evolution.</title>
        <authorList>
            <person name="Richards S."/>
            <person name="Liu Y."/>
            <person name="Bettencourt B.R."/>
            <person name="Hradecky P."/>
            <person name="Letovsky S."/>
            <person name="Nielsen R."/>
            <person name="Thornton K."/>
            <person name="Hubisz M.J."/>
            <person name="Chen R."/>
            <person name="Meisel R.P."/>
            <person name="Couronne O."/>
            <person name="Hua S."/>
            <person name="Smith M.A."/>
            <person name="Zhang P."/>
            <person name="Liu J."/>
            <person name="Bussemaker H.J."/>
            <person name="van Batenburg M.F."/>
            <person name="Howells S.L."/>
            <person name="Scherer S.E."/>
            <person name="Sodergren E."/>
            <person name="Matthews B.B."/>
            <person name="Crosby M.A."/>
            <person name="Schroeder A.J."/>
            <person name="Ortiz-Barrientos D."/>
            <person name="Rives C.M."/>
            <person name="Metzker M.L."/>
            <person name="Muzny D.M."/>
            <person name="Scott G."/>
            <person name="Steffen D."/>
            <person name="Wheeler D.A."/>
            <person name="Worley K.C."/>
            <person name="Havlak P."/>
            <person name="Durbin K.J."/>
            <person name="Egan A."/>
            <person name="Gill R."/>
            <person name="Hume J."/>
            <person name="Morgan M.B."/>
            <person name="Miner G."/>
            <person name="Hamilton C."/>
            <person name="Huang Y."/>
            <person name="Waldron L."/>
            <person name="Verduzco D."/>
            <person name="Clerc-Blankenburg K.P."/>
            <person name="Dubchak I."/>
            <person name="Noor M.A.F."/>
            <person name="Anderson W."/>
            <person name="White K.P."/>
            <person name="Clark A.G."/>
            <person name="Schaeffer S.W."/>
            <person name="Gelbart W.M."/>
            <person name="Weinstock G.M."/>
            <person name="Gibbs R.A."/>
        </authorList>
    </citation>
    <scope>NUCLEOTIDE SEQUENCE [LARGE SCALE GENOMIC DNA]</scope>
    <source>
        <strain>MV2-25 / Tucson 14011-0121.94</strain>
    </source>
</reference>